<feature type="chain" id="PRO_1000131153" description="UPF0246 protein YPTS_0629">
    <location>
        <begin position="1"/>
        <end position="258"/>
    </location>
</feature>
<reference key="1">
    <citation type="submission" date="2008-04" db="EMBL/GenBank/DDBJ databases">
        <title>Complete sequence of Yersinia pseudotuberculosis PB1/+.</title>
        <authorList>
            <person name="Copeland A."/>
            <person name="Lucas S."/>
            <person name="Lapidus A."/>
            <person name="Glavina del Rio T."/>
            <person name="Dalin E."/>
            <person name="Tice H."/>
            <person name="Bruce D."/>
            <person name="Goodwin L."/>
            <person name="Pitluck S."/>
            <person name="Munk A.C."/>
            <person name="Brettin T."/>
            <person name="Detter J.C."/>
            <person name="Han C."/>
            <person name="Tapia R."/>
            <person name="Schmutz J."/>
            <person name="Larimer F."/>
            <person name="Land M."/>
            <person name="Hauser L."/>
            <person name="Challacombe J.F."/>
            <person name="Green L."/>
            <person name="Lindler L.E."/>
            <person name="Nikolich M.P."/>
            <person name="Richardson P."/>
        </authorList>
    </citation>
    <scope>NUCLEOTIDE SEQUENCE [LARGE SCALE GENOMIC DNA]</scope>
    <source>
        <strain>PB1/+</strain>
    </source>
</reference>
<sequence length="258" mass="29073">MLIIISPAKTLDYQSPLATTKFSQPEMLDKSQALIEICRELTPAQISSLMGISDKLAGLNAARFSEWQPDFTPANARQAILAFKGDVYTGMQAESFSEADFDFAQQHLRMLSGLYGLLRPLDLMQPYRLEMGTKLANPRGKDLYAFWGDQITEKLNQALELQGDNILINLASDEYFKAVKPAKLSGSLIKPVFLDEKNGKYKIISFYAKKARGLMSRFIIQNKLTKPEQLVDFNLEGYEFDAGLSAKNELVFKRAEQH</sequence>
<protein>
    <recommendedName>
        <fullName evidence="1">UPF0246 protein YPTS_0629</fullName>
    </recommendedName>
</protein>
<proteinExistence type="inferred from homology"/>
<organism>
    <name type="scientific">Yersinia pseudotuberculosis serotype IB (strain PB1/+)</name>
    <dbReference type="NCBI Taxonomy" id="502801"/>
    <lineage>
        <taxon>Bacteria</taxon>
        <taxon>Pseudomonadati</taxon>
        <taxon>Pseudomonadota</taxon>
        <taxon>Gammaproteobacteria</taxon>
        <taxon>Enterobacterales</taxon>
        <taxon>Yersiniaceae</taxon>
        <taxon>Yersinia</taxon>
    </lineage>
</organism>
<accession>B2K3L4</accession>
<evidence type="ECO:0000255" key="1">
    <source>
        <dbReference type="HAMAP-Rule" id="MF_00652"/>
    </source>
</evidence>
<name>Y629_YERPB</name>
<comment type="similarity">
    <text evidence="1">Belongs to the UPF0246 family.</text>
</comment>
<gene>
    <name type="ordered locus">YPTS_0629</name>
</gene>
<dbReference type="EMBL" id="CP001048">
    <property type="protein sequence ID" value="ACC87613.1"/>
    <property type="molecule type" value="Genomic_DNA"/>
</dbReference>
<dbReference type="SMR" id="B2K3L4"/>
<dbReference type="KEGG" id="ypb:YPTS_0629"/>
<dbReference type="PATRIC" id="fig|502801.10.peg.4309"/>
<dbReference type="GO" id="GO:0005829">
    <property type="term" value="C:cytosol"/>
    <property type="evidence" value="ECO:0007669"/>
    <property type="project" value="TreeGrafter"/>
</dbReference>
<dbReference type="GO" id="GO:0033194">
    <property type="term" value="P:response to hydroperoxide"/>
    <property type="evidence" value="ECO:0007669"/>
    <property type="project" value="TreeGrafter"/>
</dbReference>
<dbReference type="HAMAP" id="MF_00652">
    <property type="entry name" value="UPF0246"/>
    <property type="match status" value="1"/>
</dbReference>
<dbReference type="InterPro" id="IPR005583">
    <property type="entry name" value="YaaA"/>
</dbReference>
<dbReference type="NCBIfam" id="NF002541">
    <property type="entry name" value="PRK02101.1-1"/>
    <property type="match status" value="1"/>
</dbReference>
<dbReference type="NCBIfam" id="NF002542">
    <property type="entry name" value="PRK02101.1-3"/>
    <property type="match status" value="1"/>
</dbReference>
<dbReference type="PANTHER" id="PTHR30283:SF4">
    <property type="entry name" value="PEROXIDE STRESS RESISTANCE PROTEIN YAAA"/>
    <property type="match status" value="1"/>
</dbReference>
<dbReference type="PANTHER" id="PTHR30283">
    <property type="entry name" value="PEROXIDE STRESS RESPONSE PROTEIN YAAA"/>
    <property type="match status" value="1"/>
</dbReference>
<dbReference type="Pfam" id="PF03883">
    <property type="entry name" value="H2O2_YaaD"/>
    <property type="match status" value="1"/>
</dbReference>